<sequence>MYNFLSCKKKSIILQVLLIICTYNILLNFVNIFVNNNEKNHKNKYENRIKSFYVEAYNWNFLEKWKSINTNEKLEYKINYNIGLNIDAEIGDFGDYNSDVKTDLILFKYDKDKLLSTIFIYVFSVKENKFIYHTEVSFEGKIMNVTAIDLNFDGALDVLVLFKDNKDSSKSNKYYVAAFLQNDNDQLEEIWNSKKKEQNDESITDNEEDNIYYTNIHPLICDINNDGLPDIIGQQSGGPDGFFRFIWINTRNGFKSFLWKNINIFKYSELDEITNPNSSAIVDINGDCKSDLVFTVYNSYEKRIGLEIWLNKIIDGKSFYVKYSQDYLLPPNSLQVLFGDFNGDGSIDLVVPTCVKSSFCNYCCVSDDKIYFIPNIQKKICDSSWKKPDETKCRPASNLCSESDFEFQQNLTDDFISVVDTSGLHLSGNADYPYYLSVGDIDDDGYLDLLITLKNDKGQKYVRIYKNELKIHYEENSLEVRGFYNFYQFVTSPEESVTDVYNAAFFDIFENGVLDILIFGKYITSNKKTKYAAVGFIRNNETDSLFLKSTALNGICVNDCYKEKDKITTKTLGGNAHGPTFKITVIDVNGVKSSRIGVQKSQSAHFPLQLPYVLFGLGRTSNYVEEFYVGMPTHEQKYYNMWVSIIPNSHIIVIPYPLNNSNKWQIQLSVNPSKKFYSILYITLICLSVIGVLIFILDRKEKVEDSKEELGFKSHFVIG</sequence>
<organism>
    <name type="scientific">Plasmodium falciparum (isolate 3D7)</name>
    <dbReference type="NCBI Taxonomy" id="36329"/>
    <lineage>
        <taxon>Eukaryota</taxon>
        <taxon>Sar</taxon>
        <taxon>Alveolata</taxon>
        <taxon>Apicomplexa</taxon>
        <taxon>Aconoidasida</taxon>
        <taxon>Haemosporida</taxon>
        <taxon>Plasmodiidae</taxon>
        <taxon>Plasmodium</taxon>
        <taxon>Plasmodium (Laverania)</taxon>
    </lineage>
</organism>
<gene>
    <name type="ORF">PFE1445c</name>
</gene>
<proteinExistence type="inferred from homology"/>
<dbReference type="EMBL" id="AL844504">
    <property type="protein sequence ID" value="CAD51651.1"/>
    <property type="molecule type" value="Genomic_DNA"/>
</dbReference>
<dbReference type="RefSeq" id="XP_001351844.1">
    <property type="nucleotide sequence ID" value="XM_001351808.1"/>
</dbReference>
<dbReference type="FunCoup" id="Q8I3H7">
    <property type="interactions" value="37"/>
</dbReference>
<dbReference type="SwissPalm" id="Q8I3H7"/>
<dbReference type="PaxDb" id="5833-PFE1445c"/>
<dbReference type="EnsemblProtists" id="CAD51651">
    <property type="protein sequence ID" value="CAD51651"/>
    <property type="gene ID" value="PF3D7_0529000"/>
</dbReference>
<dbReference type="KEGG" id="pfa:PF3D7_0529000"/>
<dbReference type="VEuPathDB" id="PlasmoDB:PF3D7_0529000"/>
<dbReference type="HOGENOM" id="CLU_020272_1_0_1"/>
<dbReference type="InParanoid" id="Q8I3H7"/>
<dbReference type="OMA" id="PGDWIPW"/>
<dbReference type="OrthoDB" id="10022113at2759"/>
<dbReference type="PhylomeDB" id="Q8I3H7"/>
<dbReference type="Proteomes" id="UP000001450">
    <property type="component" value="Chromosome 5"/>
</dbReference>
<dbReference type="GO" id="GO:0005886">
    <property type="term" value="C:plasma membrane"/>
    <property type="evidence" value="ECO:0000318"/>
    <property type="project" value="GO_Central"/>
</dbReference>
<dbReference type="Gene3D" id="2.130.10.130">
    <property type="entry name" value="Integrin alpha, N-terminal"/>
    <property type="match status" value="1"/>
</dbReference>
<dbReference type="InterPro" id="IPR013517">
    <property type="entry name" value="FG-GAP"/>
</dbReference>
<dbReference type="InterPro" id="IPR028994">
    <property type="entry name" value="Integrin_alpha_N"/>
</dbReference>
<dbReference type="InterPro" id="IPR024881">
    <property type="entry name" value="Tip"/>
</dbReference>
<dbReference type="PANTHER" id="PTHR13412:SF0">
    <property type="entry name" value="T-CELL IMMUNOMODULATORY PROTEIN"/>
    <property type="match status" value="1"/>
</dbReference>
<dbReference type="PANTHER" id="PTHR13412">
    <property type="entry name" value="T-CELL IMMUNOMODULATORY PROTEIN HOMOLOG"/>
    <property type="match status" value="1"/>
</dbReference>
<dbReference type="Pfam" id="PF23122">
    <property type="entry name" value="C2_ITFG1"/>
    <property type="match status" value="1"/>
</dbReference>
<dbReference type="Pfam" id="PF13517">
    <property type="entry name" value="FG-GAP_3"/>
    <property type="match status" value="1"/>
</dbReference>
<dbReference type="SUPFAM" id="SSF69318">
    <property type="entry name" value="Integrin alpha N-terminal domain"/>
    <property type="match status" value="1"/>
</dbReference>
<accession>Q8I3H7</accession>
<keyword id="KW-0325">Glycoprotein</keyword>
<keyword id="KW-0472">Membrane</keyword>
<keyword id="KW-1185">Reference proteome</keyword>
<keyword id="KW-0732">Signal</keyword>
<keyword id="KW-0812">Transmembrane</keyword>
<keyword id="KW-1133">Transmembrane helix</keyword>
<name>TIP_PLAF7</name>
<reference key="1">
    <citation type="journal article" date="2002" name="Nature">
        <title>Genome sequence of the human malaria parasite Plasmodium falciparum.</title>
        <authorList>
            <person name="Gardner M.J."/>
            <person name="Hall N."/>
            <person name="Fung E."/>
            <person name="White O."/>
            <person name="Berriman M."/>
            <person name="Hyman R.W."/>
            <person name="Carlton J.M."/>
            <person name="Pain A."/>
            <person name="Nelson K.E."/>
            <person name="Bowman S."/>
            <person name="Paulsen I.T."/>
            <person name="James K.D."/>
            <person name="Eisen J.A."/>
            <person name="Rutherford K.M."/>
            <person name="Salzberg S.L."/>
            <person name="Craig A."/>
            <person name="Kyes S."/>
            <person name="Chan M.-S."/>
            <person name="Nene V."/>
            <person name="Shallom S.J."/>
            <person name="Suh B."/>
            <person name="Peterson J."/>
            <person name="Angiuoli S."/>
            <person name="Pertea M."/>
            <person name="Allen J."/>
            <person name="Selengut J."/>
            <person name="Haft D."/>
            <person name="Mather M.W."/>
            <person name="Vaidya A.B."/>
            <person name="Martin D.M.A."/>
            <person name="Fairlamb A.H."/>
            <person name="Fraunholz M.J."/>
            <person name="Roos D.S."/>
            <person name="Ralph S.A."/>
            <person name="McFadden G.I."/>
            <person name="Cummings L.M."/>
            <person name="Subramanian G.M."/>
            <person name="Mungall C."/>
            <person name="Venter J.C."/>
            <person name="Carucci D.J."/>
            <person name="Hoffman S.L."/>
            <person name="Newbold C."/>
            <person name="Davis R.W."/>
            <person name="Fraser C.M."/>
            <person name="Barrell B.G."/>
        </authorList>
    </citation>
    <scope>NUCLEOTIDE SEQUENCE [LARGE SCALE GENOMIC DNA]</scope>
    <source>
        <strain>3D7</strain>
    </source>
</reference>
<reference key="2">
    <citation type="journal article" date="2002" name="Nature">
        <title>Sequence of Plasmodium falciparum chromosomes 1, 3-9 and 13.</title>
        <authorList>
            <person name="Hall N."/>
            <person name="Pain A."/>
            <person name="Berriman M."/>
            <person name="Churcher C.M."/>
            <person name="Harris B."/>
            <person name="Harris D."/>
            <person name="Mungall K.L."/>
            <person name="Bowman S."/>
            <person name="Atkin R."/>
            <person name="Baker S."/>
            <person name="Barron A."/>
            <person name="Brooks K."/>
            <person name="Buckee C.O."/>
            <person name="Burrows C."/>
            <person name="Cherevach I."/>
            <person name="Chillingworth C."/>
            <person name="Chillingworth T."/>
            <person name="Christodoulou Z."/>
            <person name="Clark L."/>
            <person name="Clark R."/>
            <person name="Corton C."/>
            <person name="Cronin A."/>
            <person name="Davies R.M."/>
            <person name="Davis P."/>
            <person name="Dear P."/>
            <person name="Dearden F."/>
            <person name="Doggett J."/>
            <person name="Feltwell T."/>
            <person name="Goble A."/>
            <person name="Goodhead I."/>
            <person name="Gwilliam R."/>
            <person name="Hamlin N."/>
            <person name="Hance Z."/>
            <person name="Harper D."/>
            <person name="Hauser H."/>
            <person name="Hornsby T."/>
            <person name="Holroyd S."/>
            <person name="Horrocks P."/>
            <person name="Humphray S."/>
            <person name="Jagels K."/>
            <person name="James K.D."/>
            <person name="Johnson D."/>
            <person name="Kerhornou A."/>
            <person name="Knights A."/>
            <person name="Konfortov B."/>
            <person name="Kyes S."/>
            <person name="Larke N."/>
            <person name="Lawson D."/>
            <person name="Lennard N."/>
            <person name="Line A."/>
            <person name="Maddison M."/>
            <person name="Mclean J."/>
            <person name="Mooney P."/>
            <person name="Moule S."/>
            <person name="Murphy L."/>
            <person name="Oliver K."/>
            <person name="Ormond D."/>
            <person name="Price C."/>
            <person name="Quail M.A."/>
            <person name="Rabbinowitsch E."/>
            <person name="Rajandream M.A."/>
            <person name="Rutter S."/>
            <person name="Rutherford K.M."/>
            <person name="Sanders M."/>
            <person name="Simmonds M."/>
            <person name="Seeger K."/>
            <person name="Sharp S."/>
            <person name="Smith R."/>
            <person name="Squares R."/>
            <person name="Squares S."/>
            <person name="Stevens K."/>
            <person name="Taylor K."/>
            <person name="Tivey A."/>
            <person name="Unwin L."/>
            <person name="Whitehead S."/>
            <person name="Woodward J.R."/>
            <person name="Sulston J.E."/>
            <person name="Craig A."/>
            <person name="Newbold C."/>
            <person name="Barrell B.G."/>
        </authorList>
    </citation>
    <scope>NUCLEOTIDE SEQUENCE [LARGE SCALE GENOMIC DNA]</scope>
    <source>
        <strain>3D7</strain>
    </source>
</reference>
<reference key="3">
    <citation type="journal article" date="2003" name="Nat. Biotechnol.">
        <title>A TIP on malaria (genomics).</title>
        <authorList>
            <person name="Kaczanowski S."/>
            <person name="Zielenkiewicz P."/>
        </authorList>
    </citation>
    <scope>PUTATIVE FUNCTION</scope>
</reference>
<comment type="function">
    <text>May protect the parasite against attack by the host immune system by immunomodulation.</text>
</comment>
<comment type="subcellular location">
    <subcellularLocation>
        <location evidence="2">Membrane</location>
        <topology evidence="2">Single-pass type I membrane protein</topology>
    </subcellularLocation>
</comment>
<comment type="similarity">
    <text evidence="2">Belongs to the TIP family.</text>
</comment>
<feature type="signal peptide" evidence="1">
    <location>
        <begin position="1"/>
        <end position="32"/>
    </location>
</feature>
<feature type="chain" id="PRO_0000034357" description="T-cell immunomodulatory protein homolog">
    <location>
        <begin position="33"/>
        <end position="719"/>
    </location>
</feature>
<feature type="topological domain" description="Extracellular" evidence="1">
    <location>
        <begin position="33"/>
        <end position="677"/>
    </location>
</feature>
<feature type="transmembrane region" description="Helical" evidence="1">
    <location>
        <begin position="678"/>
        <end position="697"/>
    </location>
</feature>
<feature type="topological domain" description="Cytoplasmic" evidence="1">
    <location>
        <begin position="698"/>
        <end position="719"/>
    </location>
</feature>
<feature type="glycosylation site" description="N-linked (GlcNAc...) asparagine" evidence="1">
    <location>
        <position position="144"/>
    </location>
</feature>
<feature type="glycosylation site" description="N-linked (GlcNAc...) asparagine" evidence="1">
    <location>
        <position position="277"/>
    </location>
</feature>
<feature type="glycosylation site" description="N-linked (GlcNAc...) asparagine" evidence="1">
    <location>
        <position position="410"/>
    </location>
</feature>
<feature type="glycosylation site" description="N-linked (GlcNAc...) asparagine" evidence="1">
    <location>
        <position position="540"/>
    </location>
</feature>
<feature type="glycosylation site" description="N-linked (GlcNAc...) asparagine" evidence="1">
    <location>
        <position position="659"/>
    </location>
</feature>
<evidence type="ECO:0000255" key="1"/>
<evidence type="ECO:0000305" key="2"/>
<protein>
    <recommendedName>
        <fullName>T-cell immunomodulatory protein homolog</fullName>
    </recommendedName>
</protein>